<comment type="function">
    <text evidence="3 4">ssDNA-binding protein that probably contributes to the ionizing radiation resistance of D.geothermalis. Plays a role in DNA repair and genome reconstitution, in a RecA-independent process, and is necessary for recovery from severe genomic fragmentation as a result of exposure to severe levels of ionizing radiation (Probable). Binds single-stranded DNA but not duplex DNA.</text>
</comment>
<comment type="subunit">
    <text evidence="3">Homopentamer; arranged in a ring-structure.</text>
</comment>
<comment type="induction">
    <text evidence="1">Induced to high levels following extreme ionizing radiation exposure. Also highly induced in response to desiccation stress (By similarity).</text>
</comment>
<comment type="domain">
    <text evidence="3">Contains a novel ssDNA-binding fold, which is structurally and topologically distinct from the OB-fold universally found in standard SSB proteins. The disordered C-terminus of DdrB may mediate interactions with other proteins important for DNA damage recovery.</text>
</comment>
<feature type="chain" id="PRO_0000394492" description="Single-stranded DNA-binding protein DdrB">
    <location>
        <begin position="1"/>
        <end position="178"/>
    </location>
</feature>
<feature type="region of interest" description="Disordered" evidence="2">
    <location>
        <begin position="139"/>
        <end position="178"/>
    </location>
</feature>
<feature type="compositionally biased region" description="Low complexity" evidence="2">
    <location>
        <begin position="147"/>
        <end position="165"/>
    </location>
</feature>
<feature type="strand" evidence="5">
    <location>
        <begin position="2"/>
        <end position="7"/>
    </location>
</feature>
<feature type="strand" evidence="5">
    <location>
        <begin position="13"/>
        <end position="20"/>
    </location>
</feature>
<feature type="helix" evidence="5">
    <location>
        <begin position="21"/>
        <end position="23"/>
    </location>
</feature>
<feature type="helix" evidence="5">
    <location>
        <begin position="24"/>
        <end position="32"/>
    </location>
</feature>
<feature type="turn" evidence="5">
    <location>
        <begin position="33"/>
        <end position="35"/>
    </location>
</feature>
<feature type="strand" evidence="5">
    <location>
        <begin position="46"/>
        <end position="48"/>
    </location>
</feature>
<feature type="helix" evidence="5">
    <location>
        <begin position="50"/>
        <end position="52"/>
    </location>
</feature>
<feature type="helix" evidence="5">
    <location>
        <begin position="58"/>
        <end position="61"/>
    </location>
</feature>
<feature type="strand" evidence="5">
    <location>
        <begin position="64"/>
        <end position="67"/>
    </location>
</feature>
<feature type="strand" evidence="5">
    <location>
        <begin position="73"/>
        <end position="79"/>
    </location>
</feature>
<feature type="strand" evidence="5">
    <location>
        <begin position="81"/>
        <end position="87"/>
    </location>
</feature>
<feature type="strand" evidence="5">
    <location>
        <begin position="100"/>
        <end position="106"/>
    </location>
</feature>
<feature type="strand" evidence="5">
    <location>
        <begin position="125"/>
        <end position="134"/>
    </location>
</feature>
<feature type="helix" evidence="5">
    <location>
        <begin position="138"/>
        <end position="140"/>
    </location>
</feature>
<protein>
    <recommendedName>
        <fullName>Single-stranded DNA-binding protein DdrB</fullName>
    </recommendedName>
    <alternativeName>
        <fullName>DNA damage response protein B</fullName>
    </alternativeName>
</protein>
<gene>
    <name type="primary">ddrB</name>
    <name type="ordered locus">Dgeo_0295</name>
</gene>
<proteinExistence type="evidence at protein level"/>
<name>DDRB_DEIGD</name>
<dbReference type="EMBL" id="CP000359">
    <property type="protein sequence ID" value="ABF44598.1"/>
    <property type="molecule type" value="Genomic_DNA"/>
</dbReference>
<dbReference type="RefSeq" id="WP_011529443.1">
    <property type="nucleotide sequence ID" value="NC_008025.1"/>
</dbReference>
<dbReference type="PDB" id="4EXW">
    <property type="method" value="X-ray"/>
    <property type="resolution" value="2.80 A"/>
    <property type="chains" value="A/B/C/D/E=1-178"/>
</dbReference>
<dbReference type="PDBsum" id="4EXW"/>
<dbReference type="SMR" id="Q1J1N6"/>
<dbReference type="STRING" id="319795.Dgeo_0295"/>
<dbReference type="KEGG" id="dge:Dgeo_0295"/>
<dbReference type="eggNOG" id="ENOG50337A5">
    <property type="taxonomic scope" value="Bacteria"/>
</dbReference>
<dbReference type="HOGENOM" id="CLU_129192_0_0_0"/>
<dbReference type="Proteomes" id="UP000002431">
    <property type="component" value="Chromosome"/>
</dbReference>
<dbReference type="GO" id="GO:0003697">
    <property type="term" value="F:single-stranded DNA binding"/>
    <property type="evidence" value="ECO:0000314"/>
    <property type="project" value="UniProtKB"/>
</dbReference>
<dbReference type="GO" id="GO:0006281">
    <property type="term" value="P:DNA repair"/>
    <property type="evidence" value="ECO:0007669"/>
    <property type="project" value="UniProtKB-KW"/>
</dbReference>
<dbReference type="InterPro" id="IPR024305">
    <property type="entry name" value="ssDNA-bd_DdrB-like"/>
</dbReference>
<dbReference type="Pfam" id="PF12747">
    <property type="entry name" value="DdrB"/>
    <property type="match status" value="1"/>
</dbReference>
<accession>Q1J1N6</accession>
<reference key="1">
    <citation type="submission" date="2006-04" db="EMBL/GenBank/DDBJ databases">
        <title>Complete sequence of chromosome of Deinococcus geothermalis DSM 11300.</title>
        <authorList>
            <person name="Copeland A."/>
            <person name="Lucas S."/>
            <person name="Lapidus A."/>
            <person name="Barry K."/>
            <person name="Detter J.C."/>
            <person name="Glavina del Rio T."/>
            <person name="Hammon N."/>
            <person name="Israni S."/>
            <person name="Dalin E."/>
            <person name="Tice H."/>
            <person name="Pitluck S."/>
            <person name="Brettin T."/>
            <person name="Bruce D."/>
            <person name="Han C."/>
            <person name="Tapia R."/>
            <person name="Saunders E."/>
            <person name="Gilna P."/>
            <person name="Schmutz J."/>
            <person name="Larimer F."/>
            <person name="Land M."/>
            <person name="Hauser L."/>
            <person name="Kyrpides N."/>
            <person name="Kim E."/>
            <person name="Daly M.J."/>
            <person name="Fredrickson J.K."/>
            <person name="Makarova K.S."/>
            <person name="Gaidamakova E.K."/>
            <person name="Zhai M."/>
            <person name="Richardson P."/>
        </authorList>
    </citation>
    <scope>NUCLEOTIDE SEQUENCE [LARGE SCALE GENOMIC DNA]</scope>
    <source>
        <strain>DSM 11300 / CIP 105573 / AG-3a</strain>
    </source>
</reference>
<reference key="2">
    <citation type="journal article" date="2010" name="Nucleic Acids Res.">
        <title>The structure of DdrB from Deinococcus: a new fold for single-stranded DNA binding proteins.</title>
        <authorList>
            <person name="Sugiman-Marangos S."/>
            <person name="Junop M.S."/>
        </authorList>
    </citation>
    <scope>X-RAY CRYSTALLOGRAPHY (2.8 ANGSTROMS)</scope>
    <scope>FUNCTION AS A SSB PROTEIN</scope>
    <scope>SUBUNIT</scope>
    <scope>DOMAIN</scope>
</reference>
<organism>
    <name type="scientific">Deinococcus geothermalis (strain DSM 11300 / CIP 105573 / AG-3a)</name>
    <dbReference type="NCBI Taxonomy" id="319795"/>
    <lineage>
        <taxon>Bacteria</taxon>
        <taxon>Thermotogati</taxon>
        <taxon>Deinococcota</taxon>
        <taxon>Deinococci</taxon>
        <taxon>Deinococcales</taxon>
        <taxon>Deinococcaceae</taxon>
        <taxon>Deinococcus</taxon>
    </lineage>
</organism>
<keyword id="KW-0002">3D-structure</keyword>
<keyword id="KW-0227">DNA damage</keyword>
<keyword id="KW-0234">DNA repair</keyword>
<keyword id="KW-0238">DNA-binding</keyword>
<keyword id="KW-0346">Stress response</keyword>
<evidence type="ECO:0000250" key="1"/>
<evidence type="ECO:0000256" key="2">
    <source>
        <dbReference type="SAM" id="MobiDB-lite"/>
    </source>
</evidence>
<evidence type="ECO:0000269" key="3">
    <source>
    </source>
</evidence>
<evidence type="ECO:0000305" key="4"/>
<evidence type="ECO:0007829" key="5">
    <source>
        <dbReference type="PDB" id="4EXW"/>
    </source>
</evidence>
<sequence length="178" mass="19866">MLHIEFITDLGAKVTVDVESADKLLDVQRQYGRLGWTSGEVPVGGYQFPLENEPDFDWSLIGARKWTNPEGEEMILHRGHAYRRRELEAVDSRKMKLPAAVKYSRGAKNTDPEHVREKADGEFEYVTLAIFRGGKRQERYAVPGSNRPQAGAPARSAATRAQGARPGAVAVQDEETPF</sequence>